<protein>
    <recommendedName>
        <fullName>Nitrogen regulatory protein P-II</fullName>
    </recommendedName>
</protein>
<comment type="function">
    <text evidence="1">In nitrogen-limiting conditions, when the ratio of Gln to 2-ketoglutarate decreases, P-II is uridylylated to P-II-UMP. P-II-UMP allows the deadenylation of glutamine synthetase (GS), thus activating the enzyme. Conversely, in nitrogen excess P-II is deuridylated and promotes the adenylation of GS. P-II indirectly controls the transcription of the GS gene (glnA). P-II prevents NR-II-catalyzed conversion of NR-I to NR-I-phosphate, the transcriptional activator of glnA. When P-II is uridylylated to P-II-UMP, these events are reversed (By similarity).</text>
</comment>
<comment type="subunit">
    <text evidence="1">Homotrimer.</text>
</comment>
<comment type="similarity">
    <text evidence="2">Belongs to the P(II) protein family.</text>
</comment>
<comment type="sequence caution" evidence="3">
    <conflict type="erroneous initiation">
        <sequence resource="EMBL-CDS" id="CAA05496"/>
    </conflict>
</comment>
<reference key="1">
    <citation type="journal article" date="1998" name="Mol. Plant Microbe Interact.">
        <title>The Rhizobium etli amtB gene coding for an NH4+ transporter is down-regulated early during bacteroid differentiation.</title>
        <authorList>
            <person name="Tate R."/>
            <person name="Riccio A."/>
            <person name="Merrick M."/>
            <person name="Patriarca E.J."/>
        </authorList>
    </citation>
    <scope>NUCLEOTIDE SEQUENCE [GENOMIC DNA]</scope>
    <source>
        <strain>CE3</strain>
    </source>
</reference>
<reference key="2">
    <citation type="journal article" date="2006" name="Proc. Natl. Acad. Sci. U.S.A.">
        <title>The partitioned Rhizobium etli genome: genetic and metabolic redundancy in seven interacting replicons.</title>
        <authorList>
            <person name="Gonzalez V."/>
            <person name="Santamaria R.I."/>
            <person name="Bustos P."/>
            <person name="Hernandez-Gonzalez I."/>
            <person name="Medrano-Soto A."/>
            <person name="Moreno-Hagelsieb G."/>
            <person name="Janga S.C."/>
            <person name="Ramirez M.A."/>
            <person name="Jimenez-Jacinto V."/>
            <person name="Collado-Vides J."/>
            <person name="Davila G."/>
        </authorList>
    </citation>
    <scope>NUCLEOTIDE SEQUENCE [LARGE SCALE GENOMIC DNA]</scope>
    <source>
        <strain>ATCC 51251 / DSM 11541 / JCM 21823 / NBRC 15573 / CFN 42</strain>
    </source>
</reference>
<keyword id="KW-0535">Nitrogen fixation</keyword>
<keyword id="KW-0547">Nucleotide-binding</keyword>
<keyword id="KW-0597">Phosphoprotein</keyword>
<keyword id="KW-1185">Reference proteome</keyword>
<keyword id="KW-0804">Transcription</keyword>
<keyword id="KW-0805">Transcription regulation</keyword>
<accession>O54053</accession>
<accession>Q2K367</accession>
<sequence length="112" mass="12178">MKIVMAIIKPFKLDEVREALTAIGIQGLTVTEVKGYGRQKGHTEIYRGTEYAVSFLPKLKIEIAVASELVDRAVEAIAASAKTGQIGDGKIFVYSIDHAVRIRTGETDSEAL</sequence>
<name>GLNB_RHIEC</name>
<gene>
    <name type="primary">glnB</name>
    <name type="synonym">glnK</name>
    <name type="ordered locus">RHE_CH03974</name>
</gene>
<feature type="chain" id="PRO_0000139782" description="Nitrogen regulatory protein P-II">
    <location>
        <begin position="1"/>
        <end position="112"/>
    </location>
</feature>
<feature type="modified residue" description="O-UMP-tyrosine" evidence="2">
    <location>
        <position position="51"/>
    </location>
</feature>
<feature type="sequence conflict" description="In Ref. 1; CAA05496." evidence="3" ref="1">
    <original>E</original>
    <variation>V</variation>
    <location>
        <position position="50"/>
    </location>
</feature>
<feature type="sequence conflict" description="In Ref. 1; CAA05496." evidence="3" ref="1">
    <original>A</original>
    <variation>G</variation>
    <location>
        <position position="78"/>
    </location>
</feature>
<proteinExistence type="inferred from homology"/>
<organism>
    <name type="scientific">Rhizobium etli (strain ATCC 51251 / DSM 11541 / JCM 21823 / NBRC 15573 / CFN 42)</name>
    <dbReference type="NCBI Taxonomy" id="347834"/>
    <lineage>
        <taxon>Bacteria</taxon>
        <taxon>Pseudomonadati</taxon>
        <taxon>Pseudomonadota</taxon>
        <taxon>Alphaproteobacteria</taxon>
        <taxon>Hyphomicrobiales</taxon>
        <taxon>Rhizobiaceae</taxon>
        <taxon>Rhizobium/Agrobacterium group</taxon>
        <taxon>Rhizobium</taxon>
    </lineage>
</organism>
<dbReference type="EMBL" id="AJ002489">
    <property type="protein sequence ID" value="CAA05496.1"/>
    <property type="status" value="ALT_INIT"/>
    <property type="molecule type" value="Genomic_DNA"/>
</dbReference>
<dbReference type="EMBL" id="CP000133">
    <property type="protein sequence ID" value="ABC92719.1"/>
    <property type="molecule type" value="Genomic_DNA"/>
</dbReference>
<dbReference type="SMR" id="O54053"/>
<dbReference type="KEGG" id="ret:RHE_CH03974"/>
<dbReference type="eggNOG" id="COG0347">
    <property type="taxonomic scope" value="Bacteria"/>
</dbReference>
<dbReference type="HOGENOM" id="CLU_082268_0_0_5"/>
<dbReference type="OrthoDB" id="9802729at2"/>
<dbReference type="Proteomes" id="UP000001936">
    <property type="component" value="Chromosome"/>
</dbReference>
<dbReference type="GO" id="GO:0005829">
    <property type="term" value="C:cytosol"/>
    <property type="evidence" value="ECO:0007669"/>
    <property type="project" value="TreeGrafter"/>
</dbReference>
<dbReference type="GO" id="GO:0005524">
    <property type="term" value="F:ATP binding"/>
    <property type="evidence" value="ECO:0007669"/>
    <property type="project" value="TreeGrafter"/>
</dbReference>
<dbReference type="GO" id="GO:0030234">
    <property type="term" value="F:enzyme regulator activity"/>
    <property type="evidence" value="ECO:0007669"/>
    <property type="project" value="InterPro"/>
</dbReference>
<dbReference type="GO" id="GO:0009399">
    <property type="term" value="P:nitrogen fixation"/>
    <property type="evidence" value="ECO:0007669"/>
    <property type="project" value="UniProtKB-KW"/>
</dbReference>
<dbReference type="GO" id="GO:0006808">
    <property type="term" value="P:regulation of nitrogen utilization"/>
    <property type="evidence" value="ECO:0007669"/>
    <property type="project" value="InterPro"/>
</dbReference>
<dbReference type="FunFam" id="3.30.70.120:FF:000001">
    <property type="entry name" value="Nitrogen regulatory protein P-II"/>
    <property type="match status" value="1"/>
</dbReference>
<dbReference type="Gene3D" id="3.30.70.120">
    <property type="match status" value="1"/>
</dbReference>
<dbReference type="InterPro" id="IPR002187">
    <property type="entry name" value="N-reg_PII"/>
</dbReference>
<dbReference type="InterPro" id="IPR011322">
    <property type="entry name" value="N-reg_PII-like_a/b"/>
</dbReference>
<dbReference type="InterPro" id="IPR015867">
    <property type="entry name" value="N-reg_PII/ATP_PRibTrfase_C"/>
</dbReference>
<dbReference type="InterPro" id="IPR017918">
    <property type="entry name" value="N-reg_PII_CS"/>
</dbReference>
<dbReference type="PANTHER" id="PTHR30115">
    <property type="entry name" value="NITROGEN REGULATORY PROTEIN P-II"/>
    <property type="match status" value="1"/>
</dbReference>
<dbReference type="PANTHER" id="PTHR30115:SF11">
    <property type="entry name" value="NITROGEN REGULATORY PROTEIN P-II HOMOLOG"/>
    <property type="match status" value="1"/>
</dbReference>
<dbReference type="Pfam" id="PF00543">
    <property type="entry name" value="P-II"/>
    <property type="match status" value="1"/>
</dbReference>
<dbReference type="PIRSF" id="PIRSF039144">
    <property type="entry name" value="GlnB"/>
    <property type="match status" value="1"/>
</dbReference>
<dbReference type="PRINTS" id="PR00340">
    <property type="entry name" value="PIIGLNB"/>
</dbReference>
<dbReference type="SMART" id="SM00938">
    <property type="entry name" value="P-II"/>
    <property type="match status" value="1"/>
</dbReference>
<dbReference type="SUPFAM" id="SSF54913">
    <property type="entry name" value="GlnB-like"/>
    <property type="match status" value="1"/>
</dbReference>
<dbReference type="PROSITE" id="PS00638">
    <property type="entry name" value="PII_GLNB_CTER"/>
    <property type="match status" value="1"/>
</dbReference>
<dbReference type="PROSITE" id="PS51343">
    <property type="entry name" value="PII_GLNB_DOM"/>
    <property type="match status" value="1"/>
</dbReference>
<evidence type="ECO:0000250" key="1"/>
<evidence type="ECO:0000255" key="2">
    <source>
        <dbReference type="PROSITE-ProRule" id="PRU00675"/>
    </source>
</evidence>
<evidence type="ECO:0000305" key="3"/>